<reference key="1">
    <citation type="journal article" date="1996" name="J. Bacteriol.">
        <title>glc locus of Escherichia coli: characterization of genes encoding the subunits of glycolate oxidase and the glc regulator protein.</title>
        <authorList>
            <person name="Pellicer M.T."/>
            <person name="Badia J."/>
            <person name="Aguilar J.T."/>
            <person name="Baldoma L."/>
        </authorList>
    </citation>
    <scope>NUCLEOTIDE SEQUENCE [GENOMIC DNA]</scope>
    <scope>FUNCTION</scope>
    <scope>DISRUPTION PHENOTYPE</scope>
    <scope>INDUCTION</scope>
    <source>
        <strain>K12 / W3110 / ATCC 27325 / DSM 5911</strain>
    </source>
</reference>
<reference key="2">
    <citation type="journal article" date="1997" name="Science">
        <title>The complete genome sequence of Escherichia coli K-12.</title>
        <authorList>
            <person name="Blattner F.R."/>
            <person name="Plunkett G. III"/>
            <person name="Bloch C.A."/>
            <person name="Perna N.T."/>
            <person name="Burland V."/>
            <person name="Riley M."/>
            <person name="Collado-Vides J."/>
            <person name="Glasner J.D."/>
            <person name="Rode C.K."/>
            <person name="Mayhew G.F."/>
            <person name="Gregor J."/>
            <person name="Davis N.W."/>
            <person name="Kirkpatrick H.A."/>
            <person name="Goeden M.A."/>
            <person name="Rose D.J."/>
            <person name="Mau B."/>
            <person name="Shao Y."/>
        </authorList>
    </citation>
    <scope>NUCLEOTIDE SEQUENCE [LARGE SCALE GENOMIC DNA]</scope>
    <source>
        <strain>K12 / MG1655 / ATCC 47076</strain>
    </source>
</reference>
<reference key="3">
    <citation type="journal article" date="2006" name="Mol. Syst. Biol.">
        <title>Highly accurate genome sequences of Escherichia coli K-12 strains MG1655 and W3110.</title>
        <authorList>
            <person name="Hayashi K."/>
            <person name="Morooka N."/>
            <person name="Yamamoto Y."/>
            <person name="Fujita K."/>
            <person name="Isono K."/>
            <person name="Choi S."/>
            <person name="Ohtsubo E."/>
            <person name="Baba T."/>
            <person name="Wanner B.L."/>
            <person name="Mori H."/>
            <person name="Horiuchi T."/>
        </authorList>
    </citation>
    <scope>NUCLEOTIDE SEQUENCE [LARGE SCALE GENOMIC DNA]</scope>
    <source>
        <strain>K12 / W3110 / ATCC 27325 / DSM 5911</strain>
    </source>
</reference>
<reference key="4">
    <citation type="journal article" date="1999" name="J. Biol. Chem.">
        <title>Cross-induction of glc and ace operons of Escherichia coli attributable to pathway intersection. Characterization of the glc promoter.</title>
        <authorList>
            <person name="Pellicer M.T."/>
            <person name="Fernandez C."/>
            <person name="Badia J."/>
            <person name="Aguilar J."/>
            <person name="Lin E.C."/>
            <person name="Baldom L."/>
        </authorList>
    </citation>
    <scope>FUNCTION</scope>
    <scope>INDUCTION</scope>
    <source>
        <strain>K12 / MC4100</strain>
    </source>
</reference>
<organism>
    <name type="scientific">Escherichia coli (strain K12)</name>
    <dbReference type="NCBI Taxonomy" id="83333"/>
    <lineage>
        <taxon>Bacteria</taxon>
        <taxon>Pseudomonadati</taxon>
        <taxon>Pseudomonadota</taxon>
        <taxon>Gammaproteobacteria</taxon>
        <taxon>Enterobacterales</taxon>
        <taxon>Enterobacteriaceae</taxon>
        <taxon>Escherichia</taxon>
    </lineage>
</organism>
<proteinExistence type="evidence at protein level"/>
<sequence>MKDERRPICEVVAESIERLIIDGVLKVGQPLPSERRLCEKLGFSRSALREGLTVLRGRGIIETAQGRDSRVARLNRVQDTSPLIHLFSTQPRTLYDLLDVRALLEGESARLAATLGTQADFVVITRCYEKMLAASENNKEISLIEHAQLDHAFHLAICQASHNQVLVFTLQSLTDLMFNSVFASVNNLYHRPQQKKQIDRQHARIYNAVLQRLPHVAQRAARDHVRTVKKNLHDIELEGHHLIRSAVPLEMNLS</sequence>
<keyword id="KW-0010">Activator</keyword>
<keyword id="KW-0238">DNA-binding</keyword>
<keyword id="KW-1185">Reference proteome</keyword>
<keyword id="KW-0678">Repressor</keyword>
<keyword id="KW-0804">Transcription</keyword>
<keyword id="KW-0805">Transcription regulation</keyword>
<accession>P0ACL5</accession>
<accession>P52072</accession>
<accession>Q2M9L5</accession>
<dbReference type="EMBL" id="L43490">
    <property type="protein sequence ID" value="AAB02529.1"/>
    <property type="molecule type" value="Genomic_DNA"/>
</dbReference>
<dbReference type="EMBL" id="U28377">
    <property type="protein sequence ID" value="AAA69147.1"/>
    <property type="status" value="ALT_INIT"/>
    <property type="molecule type" value="Genomic_DNA"/>
</dbReference>
<dbReference type="EMBL" id="U00096">
    <property type="protein sequence ID" value="AAC76016.1"/>
    <property type="molecule type" value="Genomic_DNA"/>
</dbReference>
<dbReference type="EMBL" id="AP009048">
    <property type="protein sequence ID" value="BAE77041.1"/>
    <property type="molecule type" value="Genomic_DNA"/>
</dbReference>
<dbReference type="PIR" id="B65084">
    <property type="entry name" value="B65084"/>
</dbReference>
<dbReference type="RefSeq" id="NP_417454.1">
    <property type="nucleotide sequence ID" value="NC_000913.3"/>
</dbReference>
<dbReference type="RefSeq" id="WP_001297764.1">
    <property type="nucleotide sequence ID" value="NZ_STEB01000001.1"/>
</dbReference>
<dbReference type="SMR" id="P0ACL5"/>
<dbReference type="BioGRID" id="4262369">
    <property type="interactions" value="98"/>
</dbReference>
<dbReference type="BioGRID" id="851784">
    <property type="interactions" value="56"/>
</dbReference>
<dbReference type="FunCoup" id="P0ACL5">
    <property type="interactions" value="55"/>
</dbReference>
<dbReference type="IntAct" id="P0ACL5">
    <property type="interactions" value="65"/>
</dbReference>
<dbReference type="STRING" id="511145.b2980"/>
<dbReference type="PaxDb" id="511145-b2980"/>
<dbReference type="EnsemblBacteria" id="AAC76016">
    <property type="protein sequence ID" value="AAC76016"/>
    <property type="gene ID" value="b2980"/>
</dbReference>
<dbReference type="GeneID" id="75205188"/>
<dbReference type="GeneID" id="947466"/>
<dbReference type="KEGG" id="ecj:JW2947"/>
<dbReference type="KEGG" id="eco:b2980"/>
<dbReference type="KEGG" id="ecoc:C3026_16305"/>
<dbReference type="PATRIC" id="fig|1411691.4.peg.3750"/>
<dbReference type="EchoBASE" id="EB2821"/>
<dbReference type="eggNOG" id="COG2186">
    <property type="taxonomic scope" value="Bacteria"/>
</dbReference>
<dbReference type="HOGENOM" id="CLU_017584_9_1_6"/>
<dbReference type="InParanoid" id="P0ACL5"/>
<dbReference type="OMA" id="HMYEHLK"/>
<dbReference type="OrthoDB" id="5450856at2"/>
<dbReference type="PhylomeDB" id="P0ACL5"/>
<dbReference type="BioCyc" id="EcoCyc:G7546-MONOMER"/>
<dbReference type="PRO" id="PR:P0ACL5"/>
<dbReference type="Proteomes" id="UP000000625">
    <property type="component" value="Chromosome"/>
</dbReference>
<dbReference type="GO" id="GO:0003677">
    <property type="term" value="F:DNA binding"/>
    <property type="evidence" value="ECO:0000314"/>
    <property type="project" value="EcoCyc"/>
</dbReference>
<dbReference type="GO" id="GO:0003700">
    <property type="term" value="F:DNA-binding transcription factor activity"/>
    <property type="evidence" value="ECO:0007669"/>
    <property type="project" value="InterPro"/>
</dbReference>
<dbReference type="GO" id="GO:0006355">
    <property type="term" value="P:regulation of DNA-templated transcription"/>
    <property type="evidence" value="ECO:0000314"/>
    <property type="project" value="EcoCyc"/>
</dbReference>
<dbReference type="CDD" id="cd07377">
    <property type="entry name" value="WHTH_GntR"/>
    <property type="match status" value="1"/>
</dbReference>
<dbReference type="FunFam" id="1.10.10.10:FF:000338">
    <property type="entry name" value="Glc operon transcriptional activator"/>
    <property type="match status" value="1"/>
</dbReference>
<dbReference type="FunFam" id="1.20.120.530:FF:000010">
    <property type="entry name" value="Glc operon transcriptional activator"/>
    <property type="match status" value="1"/>
</dbReference>
<dbReference type="Gene3D" id="1.20.120.530">
    <property type="entry name" value="GntR ligand-binding domain-like"/>
    <property type="match status" value="1"/>
</dbReference>
<dbReference type="Gene3D" id="1.10.10.10">
    <property type="entry name" value="Winged helix-like DNA-binding domain superfamily/Winged helix DNA-binding domain"/>
    <property type="match status" value="1"/>
</dbReference>
<dbReference type="InterPro" id="IPR011711">
    <property type="entry name" value="GntR_C"/>
</dbReference>
<dbReference type="InterPro" id="IPR008920">
    <property type="entry name" value="TF_FadR/GntR_C"/>
</dbReference>
<dbReference type="InterPro" id="IPR000524">
    <property type="entry name" value="Tscrpt_reg_HTH_GntR"/>
</dbReference>
<dbReference type="InterPro" id="IPR036388">
    <property type="entry name" value="WH-like_DNA-bd_sf"/>
</dbReference>
<dbReference type="InterPro" id="IPR036390">
    <property type="entry name" value="WH_DNA-bd_sf"/>
</dbReference>
<dbReference type="NCBIfam" id="NF007442">
    <property type="entry name" value="PRK09990.1"/>
    <property type="match status" value="1"/>
</dbReference>
<dbReference type="PANTHER" id="PTHR43537:SF1">
    <property type="entry name" value="GLC OPERON TRANSCRIPTIONAL ACTIVATOR"/>
    <property type="match status" value="1"/>
</dbReference>
<dbReference type="PANTHER" id="PTHR43537">
    <property type="entry name" value="TRANSCRIPTIONAL REGULATOR, GNTR FAMILY"/>
    <property type="match status" value="1"/>
</dbReference>
<dbReference type="Pfam" id="PF07729">
    <property type="entry name" value="FCD"/>
    <property type="match status" value="1"/>
</dbReference>
<dbReference type="Pfam" id="PF00392">
    <property type="entry name" value="GntR"/>
    <property type="match status" value="1"/>
</dbReference>
<dbReference type="PRINTS" id="PR00035">
    <property type="entry name" value="HTHGNTR"/>
</dbReference>
<dbReference type="SMART" id="SM00895">
    <property type="entry name" value="FCD"/>
    <property type="match status" value="1"/>
</dbReference>
<dbReference type="SMART" id="SM00345">
    <property type="entry name" value="HTH_GNTR"/>
    <property type="match status" value="1"/>
</dbReference>
<dbReference type="SUPFAM" id="SSF48008">
    <property type="entry name" value="GntR ligand-binding domain-like"/>
    <property type="match status" value="1"/>
</dbReference>
<dbReference type="SUPFAM" id="SSF46785">
    <property type="entry name" value="Winged helix' DNA-binding domain"/>
    <property type="match status" value="1"/>
</dbReference>
<dbReference type="PROSITE" id="PS50949">
    <property type="entry name" value="HTH_GNTR"/>
    <property type="match status" value="1"/>
</dbReference>
<name>GLCC_ECOLI</name>
<protein>
    <recommendedName>
        <fullName evidence="6">Glc operon transcriptional activator</fullName>
    </recommendedName>
    <alternativeName>
        <fullName evidence="4">Glc regulatory protein</fullName>
    </alternativeName>
    <alternativeName>
        <fullName>HTH-type transcriptional regulator GlcC</fullName>
    </alternativeName>
</protein>
<evidence type="ECO:0000255" key="1">
    <source>
        <dbReference type="PROSITE-ProRule" id="PRU00307"/>
    </source>
</evidence>
<evidence type="ECO:0000269" key="2">
    <source>
    </source>
</evidence>
<evidence type="ECO:0000269" key="3">
    <source>
    </source>
</evidence>
<evidence type="ECO:0000303" key="4">
    <source>
    </source>
</evidence>
<evidence type="ECO:0000305" key="5"/>
<evidence type="ECO:0000305" key="6">
    <source>
    </source>
</evidence>
<feature type="chain" id="PRO_0000050645" description="Glc operon transcriptional activator">
    <location>
        <begin position="1"/>
        <end position="254"/>
    </location>
</feature>
<feature type="domain" description="HTH gntR-type" evidence="1">
    <location>
        <begin position="6"/>
        <end position="74"/>
    </location>
</feature>
<feature type="DNA-binding region" description="H-T-H motif" evidence="1">
    <location>
        <begin position="34"/>
        <end position="53"/>
    </location>
</feature>
<gene>
    <name evidence="4" type="primary">glcC</name>
    <name type="synonym">yghN</name>
    <name type="ordered locus">b2980</name>
    <name type="ordered locus">JW2947</name>
</gene>
<comment type="function">
    <text evidence="2 3">Transcriptional activator of the glcDEFGB operon which is associated with glycolate utilization, and encodes malate synthase G and the genes needed for glycolate oxidase activity (PubMed:8606183, PubMed:9880556). Also negatively regulates the transcription of its own gene (PubMed:9880556). Glycolate acts as an effector, but GlcC can also use acetate as an alternative effector (PubMed:9880556).</text>
</comment>
<comment type="interaction">
    <interactant intactId="EBI-1115389">
        <id>P0ACL5</id>
    </interactant>
    <interactant intactId="EBI-909193">
        <id>P23893</id>
        <label>hemL</label>
    </interactant>
    <organismsDiffer>false</organismsDiffer>
    <experiments>4</experiments>
</comment>
<comment type="induction">
    <text evidence="2 3">Is constitutively expressed (PubMed:8606183). Is repressed by the presence of glycolate (PubMed:9880556). GlcC exerts an autogenous repression on its own gene (PubMed:9880556).</text>
</comment>
<comment type="disruption phenotype">
    <text evidence="2">Abolishes both glycolate oxidase and malate synthase G activities. Is unable to grow on glycolate as the sole source of carbon, in contrast to wild type.</text>
</comment>
<comment type="sequence caution" evidence="5">
    <conflict type="erroneous initiation">
        <sequence resource="EMBL-CDS" id="AAA69147"/>
    </conflict>
</comment>